<accession>C3L6U6</accession>
<name>TGT_BACAC</name>
<dbReference type="EC" id="2.4.2.29" evidence="1"/>
<dbReference type="EMBL" id="CP001215">
    <property type="protein sequence ID" value="ACP17551.1"/>
    <property type="molecule type" value="Genomic_DNA"/>
</dbReference>
<dbReference type="RefSeq" id="WP_000125362.1">
    <property type="nucleotide sequence ID" value="NC_012581.1"/>
</dbReference>
<dbReference type="SMR" id="C3L6U6"/>
<dbReference type="GeneID" id="92798989"/>
<dbReference type="KEGG" id="bah:BAMEG_4681"/>
<dbReference type="HOGENOM" id="CLU_022060_0_1_9"/>
<dbReference type="UniPathway" id="UPA00392"/>
<dbReference type="GO" id="GO:0005829">
    <property type="term" value="C:cytosol"/>
    <property type="evidence" value="ECO:0007669"/>
    <property type="project" value="TreeGrafter"/>
</dbReference>
<dbReference type="GO" id="GO:0046872">
    <property type="term" value="F:metal ion binding"/>
    <property type="evidence" value="ECO:0007669"/>
    <property type="project" value="UniProtKB-KW"/>
</dbReference>
<dbReference type="GO" id="GO:0008479">
    <property type="term" value="F:tRNA-guanosine(34) queuine transglycosylase activity"/>
    <property type="evidence" value="ECO:0007669"/>
    <property type="project" value="UniProtKB-UniRule"/>
</dbReference>
<dbReference type="GO" id="GO:0008616">
    <property type="term" value="P:queuosine biosynthetic process"/>
    <property type="evidence" value="ECO:0007669"/>
    <property type="project" value="UniProtKB-UniRule"/>
</dbReference>
<dbReference type="GO" id="GO:0002099">
    <property type="term" value="P:tRNA wobble guanine modification"/>
    <property type="evidence" value="ECO:0007669"/>
    <property type="project" value="TreeGrafter"/>
</dbReference>
<dbReference type="GO" id="GO:0101030">
    <property type="term" value="P:tRNA-guanine transglycosylation"/>
    <property type="evidence" value="ECO:0007669"/>
    <property type="project" value="InterPro"/>
</dbReference>
<dbReference type="FunFam" id="3.20.20.105:FF:000001">
    <property type="entry name" value="Queuine tRNA-ribosyltransferase"/>
    <property type="match status" value="1"/>
</dbReference>
<dbReference type="Gene3D" id="3.20.20.105">
    <property type="entry name" value="Queuine tRNA-ribosyltransferase-like"/>
    <property type="match status" value="1"/>
</dbReference>
<dbReference type="HAMAP" id="MF_00168">
    <property type="entry name" value="Q_tRNA_Tgt"/>
    <property type="match status" value="1"/>
</dbReference>
<dbReference type="InterPro" id="IPR050076">
    <property type="entry name" value="ArchSynthase1/Queuine_TRR"/>
</dbReference>
<dbReference type="InterPro" id="IPR004803">
    <property type="entry name" value="TGT"/>
</dbReference>
<dbReference type="InterPro" id="IPR036511">
    <property type="entry name" value="TGT-like_sf"/>
</dbReference>
<dbReference type="InterPro" id="IPR002616">
    <property type="entry name" value="tRNA_ribo_trans-like"/>
</dbReference>
<dbReference type="NCBIfam" id="TIGR00430">
    <property type="entry name" value="Q_tRNA_tgt"/>
    <property type="match status" value="1"/>
</dbReference>
<dbReference type="NCBIfam" id="TIGR00449">
    <property type="entry name" value="tgt_general"/>
    <property type="match status" value="1"/>
</dbReference>
<dbReference type="PANTHER" id="PTHR46499">
    <property type="entry name" value="QUEUINE TRNA-RIBOSYLTRANSFERASE"/>
    <property type="match status" value="1"/>
</dbReference>
<dbReference type="PANTHER" id="PTHR46499:SF1">
    <property type="entry name" value="QUEUINE TRNA-RIBOSYLTRANSFERASE"/>
    <property type="match status" value="1"/>
</dbReference>
<dbReference type="Pfam" id="PF01702">
    <property type="entry name" value="TGT"/>
    <property type="match status" value="1"/>
</dbReference>
<dbReference type="SUPFAM" id="SSF51713">
    <property type="entry name" value="tRNA-guanine transglycosylase"/>
    <property type="match status" value="1"/>
</dbReference>
<evidence type="ECO:0000255" key="1">
    <source>
        <dbReference type="HAMAP-Rule" id="MF_00168"/>
    </source>
</evidence>
<gene>
    <name evidence="1" type="primary">tgt</name>
    <name type="ordered locus">BAMEG_4681</name>
</gene>
<reference key="1">
    <citation type="submission" date="2008-10" db="EMBL/GenBank/DDBJ databases">
        <title>Genome sequence of Bacillus anthracis str. CDC 684.</title>
        <authorList>
            <person name="Dodson R.J."/>
            <person name="Munk A.C."/>
            <person name="Brettin T."/>
            <person name="Bruce D."/>
            <person name="Detter C."/>
            <person name="Tapia R."/>
            <person name="Han C."/>
            <person name="Sutton G."/>
            <person name="Sims D."/>
        </authorList>
    </citation>
    <scope>NUCLEOTIDE SEQUENCE [LARGE SCALE GENOMIC DNA]</scope>
    <source>
        <strain>CDC 684 / NRRL 3495</strain>
    </source>
</reference>
<sequence length="379" mass="43227">MTAIRYEFIKTCKQTGARLGRVHTPHGSFDTPTFMPVGTLATVKTMSPEELKAMDSGIILSNTYHLWLRPGHEIIREAGGLHKFMNWDRAILTDSGGFQVFSLSDFRRIEEEGVHFRNHLNGDKLFLSPEKAMEIQNALGSDIMMAFDECPPFPATFEYMKKSVERTSRWAERCLKAHERPQDQGLFGIVQGGEFEELRRQSAKDLVSMDFPGYAVGGLSVGEPKDIMNRVLEFTTPLLPDNKPRYLMGVGSPDSLIDGAIRGIDMFDCVLPTRIARNGTCMTSEGRLVVKNAKFARDFGPLDPNCDCYTCKNYSRAYIRHLMKCDETFGIRLTSYHNLHFLLNLMEQVRQAIREDRLGDFREEFFEQYGFNKPNAKNF</sequence>
<organism>
    <name type="scientific">Bacillus anthracis (strain CDC 684 / NRRL 3495)</name>
    <dbReference type="NCBI Taxonomy" id="568206"/>
    <lineage>
        <taxon>Bacteria</taxon>
        <taxon>Bacillati</taxon>
        <taxon>Bacillota</taxon>
        <taxon>Bacilli</taxon>
        <taxon>Bacillales</taxon>
        <taxon>Bacillaceae</taxon>
        <taxon>Bacillus</taxon>
        <taxon>Bacillus cereus group</taxon>
    </lineage>
</organism>
<feature type="chain" id="PRO_1000197978" description="Queuine tRNA-ribosyltransferase">
    <location>
        <begin position="1"/>
        <end position="379"/>
    </location>
</feature>
<feature type="region of interest" description="RNA binding" evidence="1">
    <location>
        <begin position="249"/>
        <end position="255"/>
    </location>
</feature>
<feature type="region of interest" description="RNA binding; important for wobble base 34 recognition" evidence="1">
    <location>
        <begin position="273"/>
        <end position="277"/>
    </location>
</feature>
<feature type="active site" description="Proton acceptor" evidence="1">
    <location>
        <position position="94"/>
    </location>
</feature>
<feature type="active site" description="Nucleophile" evidence="1">
    <location>
        <position position="268"/>
    </location>
</feature>
<feature type="binding site" evidence="1">
    <location>
        <begin position="94"/>
        <end position="98"/>
    </location>
    <ligand>
        <name>substrate</name>
    </ligand>
</feature>
<feature type="binding site" evidence="1">
    <location>
        <position position="148"/>
    </location>
    <ligand>
        <name>substrate</name>
    </ligand>
</feature>
<feature type="binding site" evidence="1">
    <location>
        <position position="191"/>
    </location>
    <ligand>
        <name>substrate</name>
    </ligand>
</feature>
<feature type="binding site" evidence="1">
    <location>
        <position position="218"/>
    </location>
    <ligand>
        <name>substrate</name>
    </ligand>
</feature>
<feature type="binding site" evidence="1">
    <location>
        <position position="306"/>
    </location>
    <ligand>
        <name>Zn(2+)</name>
        <dbReference type="ChEBI" id="CHEBI:29105"/>
    </ligand>
</feature>
<feature type="binding site" evidence="1">
    <location>
        <position position="308"/>
    </location>
    <ligand>
        <name>Zn(2+)</name>
        <dbReference type="ChEBI" id="CHEBI:29105"/>
    </ligand>
</feature>
<feature type="binding site" evidence="1">
    <location>
        <position position="311"/>
    </location>
    <ligand>
        <name>Zn(2+)</name>
        <dbReference type="ChEBI" id="CHEBI:29105"/>
    </ligand>
</feature>
<feature type="binding site" evidence="1">
    <location>
        <position position="337"/>
    </location>
    <ligand>
        <name>Zn(2+)</name>
        <dbReference type="ChEBI" id="CHEBI:29105"/>
    </ligand>
</feature>
<protein>
    <recommendedName>
        <fullName evidence="1">Queuine tRNA-ribosyltransferase</fullName>
        <ecNumber evidence="1">2.4.2.29</ecNumber>
    </recommendedName>
    <alternativeName>
        <fullName evidence="1">Guanine insertion enzyme</fullName>
    </alternativeName>
    <alternativeName>
        <fullName evidence="1">tRNA-guanine transglycosylase</fullName>
    </alternativeName>
</protein>
<keyword id="KW-0328">Glycosyltransferase</keyword>
<keyword id="KW-0479">Metal-binding</keyword>
<keyword id="KW-0671">Queuosine biosynthesis</keyword>
<keyword id="KW-0808">Transferase</keyword>
<keyword id="KW-0819">tRNA processing</keyword>
<keyword id="KW-0862">Zinc</keyword>
<proteinExistence type="inferred from homology"/>
<comment type="function">
    <text evidence="1">Catalyzes the base-exchange of a guanine (G) residue with the queuine precursor 7-aminomethyl-7-deazaguanine (PreQ1) at position 34 (anticodon wobble position) in tRNAs with GU(N) anticodons (tRNA-Asp, -Asn, -His and -Tyr). Catalysis occurs through a double-displacement mechanism. The nucleophile active site attacks the C1' of nucleotide 34 to detach the guanine base from the RNA, forming a covalent enzyme-RNA intermediate. The proton acceptor active site deprotonates the incoming PreQ1, allowing a nucleophilic attack on the C1' of the ribose to form the product. After dissociation, two additional enzymatic reactions on the tRNA convert PreQ1 to queuine (Q), resulting in the hypermodified nucleoside queuosine (7-(((4,5-cis-dihydroxy-2-cyclopenten-1-yl)amino)methyl)-7-deazaguanosine).</text>
</comment>
<comment type="catalytic activity">
    <reaction evidence="1">
        <text>7-aminomethyl-7-carbaguanine + guanosine(34) in tRNA = 7-aminomethyl-7-carbaguanosine(34) in tRNA + guanine</text>
        <dbReference type="Rhea" id="RHEA:24104"/>
        <dbReference type="Rhea" id="RHEA-COMP:10341"/>
        <dbReference type="Rhea" id="RHEA-COMP:10342"/>
        <dbReference type="ChEBI" id="CHEBI:16235"/>
        <dbReference type="ChEBI" id="CHEBI:58703"/>
        <dbReference type="ChEBI" id="CHEBI:74269"/>
        <dbReference type="ChEBI" id="CHEBI:82833"/>
        <dbReference type="EC" id="2.4.2.29"/>
    </reaction>
</comment>
<comment type="cofactor">
    <cofactor evidence="1">
        <name>Zn(2+)</name>
        <dbReference type="ChEBI" id="CHEBI:29105"/>
    </cofactor>
    <text evidence="1">Binds 1 zinc ion per subunit.</text>
</comment>
<comment type="pathway">
    <text evidence="1">tRNA modification; tRNA-queuosine biosynthesis.</text>
</comment>
<comment type="subunit">
    <text evidence="1">Homodimer. Within each dimer, one monomer is responsible for RNA recognition and catalysis, while the other monomer binds to the replacement base PreQ1.</text>
</comment>
<comment type="similarity">
    <text evidence="1">Belongs to the queuine tRNA-ribosyltransferase family.</text>
</comment>